<keyword id="KW-0024">Alternative initiation</keyword>
<keyword id="KW-0167">Capsid protein</keyword>
<keyword id="KW-1139">Helical capsid protein</keyword>
<keyword id="KW-0687">Ribonucleoprotein</keyword>
<keyword id="KW-0694">RNA-binding</keyword>
<keyword id="KW-0543">Viral nucleoprotein</keyword>
<keyword id="KW-0946">Virion</keyword>
<accession>P12414</accession>
<organismHost>
    <name type="scientific">Bos taurus</name>
    <name type="common">Bovine</name>
    <dbReference type="NCBI Taxonomy" id="9913"/>
</organismHost>
<organism>
    <name type="scientific">Aino virus</name>
    <dbReference type="NCBI Taxonomy" id="11582"/>
    <lineage>
        <taxon>Viruses</taxon>
        <taxon>Riboviria</taxon>
        <taxon>Orthornavirae</taxon>
        <taxon>Negarnaviricota</taxon>
        <taxon>Polyploviricotina</taxon>
        <taxon>Ellioviricetes</taxon>
        <taxon>Bunyavirales</taxon>
        <taxon>Peribunyaviridae</taxon>
        <taxon>Orthobunyavirus</taxon>
        <taxon>Orthobunyavirus ainoense</taxon>
    </lineage>
</organism>
<comment type="function">
    <text evidence="2">Encapsidates the genome protecting it from nucleases. The encapsidated genomic RNA is termed the nucleocapsid (NC) and serves as template for transcription and replication. The NC have a helical organization.</text>
</comment>
<comment type="subunit">
    <text evidence="2">Homotetramer. Binds the viral genomic RNA.</text>
</comment>
<comment type="subcellular location">
    <subcellularLocation>
        <location evidence="2">Virion</location>
    </subcellularLocation>
    <text evidence="2">Located inside the virion, complexed with the viral RNA.</text>
</comment>
<comment type="alternative products">
    <event type="alternative initiation"/>
    <isoform>
        <id>P12414-1</id>
        <name>N</name>
        <sequence type="displayed"/>
    </isoform>
    <isoform>
        <id>P12413-1</id>
        <name>NSS</name>
        <sequence type="external"/>
    </isoform>
</comment>
<comment type="domain">
    <text evidence="2">The N-terminus and C-terminus are involved in homooligomerization and play an essential role in viral RNA synthesis.</text>
</comment>
<comment type="similarity">
    <text evidence="3">Belongs to the orthobunyavirus nucleocapsid protein family.</text>
</comment>
<proteinExistence type="inferred from homology"/>
<reference key="1">
    <citation type="journal article" date="1984" name="Virus Res.">
        <title>Localized conserved regions of the S RNA gene products of bunyaviruses are revealed by sequence analyses of the Simbu serogroup Aino virus.</title>
        <authorList>
            <person name="Akashi H."/>
            <person name="Gay M."/>
            <person name="Ihara T."/>
            <person name="Bishop D.H.L."/>
        </authorList>
    </citation>
    <scope>NUCLEOTIDE SEQUENCE [GENOMIC RNA]</scope>
</reference>
<gene>
    <name type="primary">N</name>
</gene>
<evidence type="ECO:0000250" key="1">
    <source>
        <dbReference type="UniProtKB" id="P04873"/>
    </source>
</evidence>
<evidence type="ECO:0000250" key="2">
    <source>
        <dbReference type="UniProtKB" id="P16495"/>
    </source>
</evidence>
<evidence type="ECO:0000305" key="3"/>
<feature type="chain" id="PRO_0000221988" description="Nucleoprotein">
    <location>
        <begin position="1"/>
        <end position="233"/>
    </location>
</feature>
<feature type="binding site" evidence="2">
    <location>
        <position position="48"/>
    </location>
    <ligand>
        <name>RNA</name>
        <dbReference type="ChEBI" id="CHEBI:33697"/>
    </ligand>
</feature>
<feature type="binding site" evidence="2">
    <location>
        <position position="51"/>
    </location>
    <ligand>
        <name>RNA</name>
        <dbReference type="ChEBI" id="CHEBI:33697"/>
    </ligand>
</feature>
<feature type="binding site" evidence="1">
    <location>
        <position position="76"/>
    </location>
    <ligand>
        <name>RNA</name>
        <dbReference type="ChEBI" id="CHEBI:33697"/>
    </ligand>
</feature>
<feature type="binding site" evidence="1">
    <location>
        <position position="77"/>
    </location>
    <ligand>
        <name>RNA</name>
        <dbReference type="ChEBI" id="CHEBI:33697"/>
    </ligand>
</feature>
<feature type="binding site" evidence="2">
    <location>
        <position position="95"/>
    </location>
    <ligand>
        <name>RNA</name>
        <dbReference type="ChEBI" id="CHEBI:33697"/>
    </ligand>
</feature>
<feature type="binding site" evidence="1">
    <location>
        <position position="123"/>
    </location>
    <ligand>
        <name>RNA</name>
        <dbReference type="ChEBI" id="CHEBI:33697"/>
    </ligand>
</feature>
<feature type="binding site" evidence="1">
    <location>
        <position position="125"/>
    </location>
    <ligand>
        <name>RNA</name>
        <dbReference type="ChEBI" id="CHEBI:33697"/>
    </ligand>
</feature>
<feature type="binding site" evidence="1">
    <location>
        <position position="128"/>
    </location>
    <ligand>
        <name>RNA</name>
        <dbReference type="ChEBI" id="CHEBI:33697"/>
    </ligand>
</feature>
<feature type="binding site" evidence="1">
    <location>
        <position position="166"/>
    </location>
    <ligand>
        <name>RNA</name>
        <dbReference type="ChEBI" id="CHEBI:33697"/>
    </ligand>
</feature>
<feature type="binding site" evidence="2">
    <location>
        <position position="182"/>
    </location>
    <ligand>
        <name>RNA</name>
        <dbReference type="ChEBI" id="CHEBI:33697"/>
    </ligand>
</feature>
<feature type="binding site" evidence="2">
    <location>
        <position position="183"/>
    </location>
    <ligand>
        <name>RNA</name>
        <dbReference type="ChEBI" id="CHEBI:33697"/>
    </ligand>
</feature>
<feature type="binding site" evidence="2">
    <location>
        <position position="184"/>
    </location>
    <ligand>
        <name>RNA</name>
        <dbReference type="ChEBI" id="CHEBI:33697"/>
    </ligand>
</feature>
<name>NCAP_AINOV</name>
<dbReference type="EMBL" id="M22011">
    <property type="protein sequence ID" value="AAA42543.1"/>
    <property type="molecule type" value="Genomic_RNA"/>
</dbReference>
<dbReference type="PIR" id="S07414">
    <property type="entry name" value="VHVUAV"/>
</dbReference>
<dbReference type="SMR" id="P12414"/>
<dbReference type="GO" id="GO:0019029">
    <property type="term" value="C:helical viral capsid"/>
    <property type="evidence" value="ECO:0007669"/>
    <property type="project" value="UniProtKB-KW"/>
</dbReference>
<dbReference type="GO" id="GO:1990904">
    <property type="term" value="C:ribonucleoprotein complex"/>
    <property type="evidence" value="ECO:0007669"/>
    <property type="project" value="UniProtKB-KW"/>
</dbReference>
<dbReference type="GO" id="GO:0019013">
    <property type="term" value="C:viral nucleocapsid"/>
    <property type="evidence" value="ECO:0007669"/>
    <property type="project" value="UniProtKB-KW"/>
</dbReference>
<dbReference type="GO" id="GO:0003723">
    <property type="term" value="F:RNA binding"/>
    <property type="evidence" value="ECO:0007669"/>
    <property type="project" value="UniProtKB-KW"/>
</dbReference>
<dbReference type="Gene3D" id="1.20.142.20">
    <property type="match status" value="1"/>
</dbReference>
<dbReference type="Gene3D" id="1.10.472.180">
    <property type="entry name" value="Bunyavirus nucleocapsid (N) protein, C-terminal domain"/>
    <property type="match status" value="1"/>
</dbReference>
<dbReference type="InterPro" id="IPR001784">
    <property type="entry name" value="Bunya_nucleocap"/>
</dbReference>
<dbReference type="InterPro" id="IPR043011">
    <property type="entry name" value="Bunya_nucleocap_C"/>
</dbReference>
<dbReference type="InterPro" id="IPR043012">
    <property type="entry name" value="Bunya_nucleocap_N"/>
</dbReference>
<dbReference type="Pfam" id="PF00952">
    <property type="entry name" value="Bunya_nucleocap"/>
    <property type="match status" value="1"/>
</dbReference>
<dbReference type="PIRSF" id="PIRSF003947">
    <property type="entry name" value="N_OrthobunV"/>
    <property type="match status" value="1"/>
</dbReference>
<protein>
    <recommendedName>
        <fullName>Nucleoprotein</fullName>
    </recommendedName>
    <alternativeName>
        <fullName>Nucleocapsid protein</fullName>
        <shortName>Protein N</shortName>
    </alternativeName>
</protein>
<sequence length="233" mass="26280">MANQFIFQDVPQRNLATFNPEVGYVAFIAKHGAQLNFDTVRFFFLNQKKAKMVLSKTAQPSVDLTFGGIKFTLVNNHFPQYTANPVPDTALTLHRLSGYLAKWVADQCKTNQIKLAEAMEKIVMPLAEVKGCTWTEGLTMYLGFAPGAEMFLETFEFYPLVIDMHRVLKDGMDVNFMRKVLRQRYGTLTAEQWMTQKIDAVRAAFNAVGQLSWAKSGFSPAARAFLAQFGINI</sequence>